<gene>
    <name type="primary">R3HDM2</name>
</gene>
<keyword id="KW-0539">Nucleus</keyword>
<keyword id="KW-0597">Phosphoprotein</keyword>
<keyword id="KW-1185">Reference proteome</keyword>
<feature type="chain" id="PRO_0000290032" description="R3H domain-containing protein 2">
    <location>
        <begin position="1"/>
        <end position="989"/>
    </location>
</feature>
<feature type="domain" description="R3H" evidence="3">
    <location>
        <begin position="169"/>
        <end position="232"/>
    </location>
</feature>
<feature type="domain" description="SUZ" evidence="4">
    <location>
        <begin position="233"/>
        <end position="303"/>
    </location>
</feature>
<feature type="region of interest" description="Disordered" evidence="5">
    <location>
        <begin position="23"/>
        <end position="71"/>
    </location>
</feature>
<feature type="region of interest" description="Disordered" evidence="5">
    <location>
        <begin position="106"/>
        <end position="147"/>
    </location>
</feature>
<feature type="region of interest" description="Disordered" evidence="5">
    <location>
        <begin position="267"/>
        <end position="288"/>
    </location>
</feature>
<feature type="region of interest" description="Disordered" evidence="5">
    <location>
        <begin position="306"/>
        <end position="390"/>
    </location>
</feature>
<feature type="region of interest" description="Disordered" evidence="5">
    <location>
        <begin position="416"/>
        <end position="479"/>
    </location>
</feature>
<feature type="region of interest" description="Disordered" evidence="5">
    <location>
        <begin position="493"/>
        <end position="524"/>
    </location>
</feature>
<feature type="region of interest" description="Disordered" evidence="5">
    <location>
        <begin position="674"/>
        <end position="738"/>
    </location>
</feature>
<feature type="region of interest" description="Disordered" evidence="5">
    <location>
        <begin position="751"/>
        <end position="793"/>
    </location>
</feature>
<feature type="region of interest" description="Disordered" evidence="5">
    <location>
        <begin position="848"/>
        <end position="867"/>
    </location>
</feature>
<feature type="compositionally biased region" description="Basic and acidic residues" evidence="5">
    <location>
        <begin position="36"/>
        <end position="56"/>
    </location>
</feature>
<feature type="compositionally biased region" description="Basic residues" evidence="5">
    <location>
        <begin position="58"/>
        <end position="71"/>
    </location>
</feature>
<feature type="compositionally biased region" description="Basic and acidic residues" evidence="5">
    <location>
        <begin position="109"/>
        <end position="143"/>
    </location>
</feature>
<feature type="compositionally biased region" description="Basic and acidic residues" evidence="5">
    <location>
        <begin position="277"/>
        <end position="288"/>
    </location>
</feature>
<feature type="compositionally biased region" description="Low complexity" evidence="5">
    <location>
        <begin position="320"/>
        <end position="331"/>
    </location>
</feature>
<feature type="compositionally biased region" description="Low complexity" evidence="5">
    <location>
        <begin position="416"/>
        <end position="428"/>
    </location>
</feature>
<feature type="compositionally biased region" description="Polar residues" evidence="5">
    <location>
        <begin position="454"/>
        <end position="466"/>
    </location>
</feature>
<feature type="compositionally biased region" description="Polar residues" evidence="5">
    <location>
        <begin position="493"/>
        <end position="517"/>
    </location>
</feature>
<feature type="compositionally biased region" description="Pro residues" evidence="5">
    <location>
        <begin position="695"/>
        <end position="704"/>
    </location>
</feature>
<feature type="compositionally biased region" description="Low complexity" evidence="5">
    <location>
        <begin position="705"/>
        <end position="727"/>
    </location>
</feature>
<feature type="compositionally biased region" description="Polar residues" evidence="5">
    <location>
        <begin position="761"/>
        <end position="771"/>
    </location>
</feature>
<feature type="compositionally biased region" description="Low complexity" evidence="5">
    <location>
        <begin position="772"/>
        <end position="790"/>
    </location>
</feature>
<feature type="modified residue" description="Phosphoserine" evidence="2">
    <location>
        <position position="37"/>
    </location>
</feature>
<feature type="modified residue" description="Phosphoserine" evidence="1">
    <location>
        <position position="143"/>
    </location>
</feature>
<feature type="modified residue" description="Phosphoserine" evidence="2">
    <location>
        <position position="344"/>
    </location>
</feature>
<feature type="modified residue" description="Phosphoserine" evidence="1">
    <location>
        <position position="347"/>
    </location>
</feature>
<feature type="modified residue" description="Phosphoserine" evidence="2">
    <location>
        <position position="363"/>
    </location>
</feature>
<feature type="modified residue" description="Phosphoserine" evidence="2">
    <location>
        <position position="866"/>
    </location>
</feature>
<feature type="modified residue" description="Phosphoserine" evidence="2">
    <location>
        <position position="868"/>
    </location>
</feature>
<feature type="modified residue" description="Phosphothreonine" evidence="1">
    <location>
        <position position="869"/>
    </location>
</feature>
<feature type="modified residue" description="Phosphothreonine" evidence="1">
    <location>
        <position position="873"/>
    </location>
</feature>
<dbReference type="EMBL" id="BC126608">
    <property type="protein sequence ID" value="AAI26609.1"/>
    <property type="molecule type" value="mRNA"/>
</dbReference>
<dbReference type="RefSeq" id="NP_001071502.1">
    <property type="nucleotide sequence ID" value="NM_001078034.1"/>
</dbReference>
<dbReference type="RefSeq" id="XP_059742672.1">
    <property type="nucleotide sequence ID" value="XM_059886689.1"/>
</dbReference>
<dbReference type="BMRB" id="A0JNC2"/>
<dbReference type="SMR" id="A0JNC2"/>
<dbReference type="FunCoup" id="A0JNC2">
    <property type="interactions" value="1914"/>
</dbReference>
<dbReference type="STRING" id="9913.ENSBTAP00000024431"/>
<dbReference type="iPTMnet" id="A0JNC2"/>
<dbReference type="PaxDb" id="9913-ENSBTAP00000024431"/>
<dbReference type="GeneID" id="613499"/>
<dbReference type="KEGG" id="bta:613499"/>
<dbReference type="CTD" id="22864"/>
<dbReference type="VEuPathDB" id="HostDB:ENSBTAG00000018361"/>
<dbReference type="eggNOG" id="KOG2953">
    <property type="taxonomic scope" value="Eukaryota"/>
</dbReference>
<dbReference type="InParanoid" id="A0JNC2"/>
<dbReference type="OMA" id="XMALGAP"/>
<dbReference type="OrthoDB" id="278430at2759"/>
<dbReference type="Proteomes" id="UP000009136">
    <property type="component" value="Chromosome 5"/>
</dbReference>
<dbReference type="Bgee" id="ENSBTAG00000018361">
    <property type="expression patterns" value="Expressed in granulosa cell and 105 other cell types or tissues"/>
</dbReference>
<dbReference type="GO" id="GO:0005634">
    <property type="term" value="C:nucleus"/>
    <property type="evidence" value="ECO:0007669"/>
    <property type="project" value="UniProtKB-SubCell"/>
</dbReference>
<dbReference type="GO" id="GO:0003676">
    <property type="term" value="F:nucleic acid binding"/>
    <property type="evidence" value="ECO:0007669"/>
    <property type="project" value="InterPro"/>
</dbReference>
<dbReference type="CDD" id="cd02642">
    <property type="entry name" value="R3H_encore_like"/>
    <property type="match status" value="1"/>
</dbReference>
<dbReference type="FunFam" id="3.30.1370.50:FF:000001">
    <property type="entry name" value="R3H domain-containing protein 2 isoform 1"/>
    <property type="match status" value="1"/>
</dbReference>
<dbReference type="Gene3D" id="3.30.1370.50">
    <property type="entry name" value="R3H-like domain"/>
    <property type="match status" value="1"/>
</dbReference>
<dbReference type="InterPro" id="IPR001374">
    <property type="entry name" value="R3H_dom"/>
</dbReference>
<dbReference type="InterPro" id="IPR036867">
    <property type="entry name" value="R3H_dom_sf"/>
</dbReference>
<dbReference type="InterPro" id="IPR051937">
    <property type="entry name" value="R3H_domain_containing"/>
</dbReference>
<dbReference type="InterPro" id="IPR024771">
    <property type="entry name" value="SUZ"/>
</dbReference>
<dbReference type="PANTHER" id="PTHR15672">
    <property type="entry name" value="CAMP-REGULATED PHOSPHOPROTEIN 21 RELATED R3H DOMAIN CONTAINING PROTEIN"/>
    <property type="match status" value="1"/>
</dbReference>
<dbReference type="PANTHER" id="PTHR15672:SF13">
    <property type="entry name" value="R3H DOMAIN-CONTAINING PROTEIN 2"/>
    <property type="match status" value="1"/>
</dbReference>
<dbReference type="Pfam" id="PF01424">
    <property type="entry name" value="R3H"/>
    <property type="match status" value="1"/>
</dbReference>
<dbReference type="Pfam" id="PF12752">
    <property type="entry name" value="SUZ"/>
    <property type="match status" value="1"/>
</dbReference>
<dbReference type="SMART" id="SM00393">
    <property type="entry name" value="R3H"/>
    <property type="match status" value="1"/>
</dbReference>
<dbReference type="SUPFAM" id="SSF82708">
    <property type="entry name" value="R3H domain"/>
    <property type="match status" value="1"/>
</dbReference>
<dbReference type="PROSITE" id="PS51061">
    <property type="entry name" value="R3H"/>
    <property type="match status" value="1"/>
</dbReference>
<dbReference type="PROSITE" id="PS51673">
    <property type="entry name" value="SUZ"/>
    <property type="match status" value="1"/>
</dbReference>
<sequence length="989" mass="108712">MSNSNTTQETLEIMKESEKKLVEESVNKNKFISKTPSKEEIEKESEDTSLRQETQRRTSNHGHARKRAKSNSKLKLVRSLAVCEESSAPFVDGPLETQDIIQLHISCPSDKEEEKSTKDVSEKEDKDKNKEKVPRRMLSRDSSQEYTDSTGIDLHEFLVNTLKKNPRDRMMLLKLEQEILDFINDNNNQFKKFPQMTSYHRMLLHRVAAYFGMDHNVDQTGKAVIINKTSNTRIPEQRFSEHIKDEKNTEFQQRFILKRDDASMDRDDNQIRVPLQDGRRSKSIEEREEEYQRVRERIFARETGQNGYLNDIRGNREGLSRTSSSRQSSTDSELKSLEPRPWSSTDSDGSVRSMRPPVTKASSFSGISILTRGDSIGSSKGGSAGRISRPGMALGAPEVCNQVTSSQSVRGLLPCTAQQQQQQQQQLPALPPTPQQQPPLNNHMISQADDLSNPFGQMSLSRQGSTEAADPSSALFQPPLISQHPQQTSFIMASTGQPLPTSNYSTSSHAPPTQQVLPPQGYMQPPQQIQVSYYSPGQYPNSNQQYRPLSHPVAYSPQRGQQLPQPSQQPGLQPMMPNQQQAAYQGMIGVQQPQNQGLLSNQRSGMGGQMQGLVVQYTPLPSYQVPVGNDSQNVVQPPFQQPMLVPASQSVQGALPAGGVPVYYSMIPPAQQNGTSPSVGFLQPPGSEQYQMPQSPSPCSPPQMPQQYSGVSPSGPGVVVMQLNVPNGPQPPQNPSMVQWSHCKYYSMDQRGQKPGDLYSPESSPQANTQMSSSPVTSPTQSPAPSPVTSLSNVCTGLSPLPVLTQFPRPGGPAQGDGRYSLLGQPLQYNLSICPPLLHGQSAYSVHQGQSGLKHGNRSKRQALKSASTDLGTTDVVLGRVLEVTDLPEGITRTEADKLFTQLAMSGAKIQWLKDAQGLPGGGGGDNGGTAENGRHSDLAALYTIVAVFPSPLAAQNASLRLNNSVSRFKLRVAKKNYDLRILERASSQ</sequence>
<organism>
    <name type="scientific">Bos taurus</name>
    <name type="common">Bovine</name>
    <dbReference type="NCBI Taxonomy" id="9913"/>
    <lineage>
        <taxon>Eukaryota</taxon>
        <taxon>Metazoa</taxon>
        <taxon>Chordata</taxon>
        <taxon>Craniata</taxon>
        <taxon>Vertebrata</taxon>
        <taxon>Euteleostomi</taxon>
        <taxon>Mammalia</taxon>
        <taxon>Eutheria</taxon>
        <taxon>Laurasiatheria</taxon>
        <taxon>Artiodactyla</taxon>
        <taxon>Ruminantia</taxon>
        <taxon>Pecora</taxon>
        <taxon>Bovidae</taxon>
        <taxon>Bovinae</taxon>
        <taxon>Bos</taxon>
    </lineage>
</organism>
<name>R3HD2_BOVIN</name>
<proteinExistence type="evidence at transcript level"/>
<reference key="1">
    <citation type="submission" date="2006-10" db="EMBL/GenBank/DDBJ databases">
        <authorList>
            <consortium name="NIH - Mammalian Gene Collection (MGC) project"/>
        </authorList>
    </citation>
    <scope>NUCLEOTIDE SEQUENCE [LARGE SCALE MRNA]</scope>
    <source>
        <strain>Hereford</strain>
        <tissue>Thalamus</tissue>
    </source>
</reference>
<protein>
    <recommendedName>
        <fullName>R3H domain-containing protein 2</fullName>
    </recommendedName>
</protein>
<accession>A0JNC2</accession>
<comment type="subcellular location">
    <subcellularLocation>
        <location evidence="6">Nucleus</location>
    </subcellularLocation>
</comment>
<evidence type="ECO:0000250" key="1">
    <source>
        <dbReference type="UniProtKB" id="Q80TM6"/>
    </source>
</evidence>
<evidence type="ECO:0000250" key="2">
    <source>
        <dbReference type="UniProtKB" id="Q9Y2K5"/>
    </source>
</evidence>
<evidence type="ECO:0000255" key="3">
    <source>
        <dbReference type="PROSITE-ProRule" id="PRU00382"/>
    </source>
</evidence>
<evidence type="ECO:0000255" key="4">
    <source>
        <dbReference type="PROSITE-ProRule" id="PRU01009"/>
    </source>
</evidence>
<evidence type="ECO:0000256" key="5">
    <source>
        <dbReference type="SAM" id="MobiDB-lite"/>
    </source>
</evidence>
<evidence type="ECO:0000305" key="6"/>